<dbReference type="EMBL" id="CP001095">
    <property type="protein sequence ID" value="ACJ53551.1"/>
    <property type="molecule type" value="Genomic_DNA"/>
</dbReference>
<dbReference type="EMBL" id="AP010889">
    <property type="status" value="NOT_ANNOTATED_CDS"/>
    <property type="molecule type" value="Genomic_DNA"/>
</dbReference>
<dbReference type="KEGG" id="bln:Blon_2497"/>
<dbReference type="Proteomes" id="UP000001360">
    <property type="component" value="Chromosome"/>
</dbReference>
<dbReference type="GO" id="GO:0005886">
    <property type="term" value="C:plasma membrane"/>
    <property type="evidence" value="ECO:0007669"/>
    <property type="project" value="UniProtKB-SubCell"/>
</dbReference>
<dbReference type="HAMAP" id="MF_00386">
    <property type="entry name" value="UPF0161_YidD"/>
    <property type="match status" value="1"/>
</dbReference>
<dbReference type="InterPro" id="IPR002696">
    <property type="entry name" value="Membr_insert_effic_factor_YidD"/>
</dbReference>
<dbReference type="NCBIfam" id="TIGR00278">
    <property type="entry name" value="membrane protein insertion efficiency factor YidD"/>
    <property type="match status" value="1"/>
</dbReference>
<dbReference type="PANTHER" id="PTHR33383">
    <property type="entry name" value="MEMBRANE PROTEIN INSERTION EFFICIENCY FACTOR-RELATED"/>
    <property type="match status" value="1"/>
</dbReference>
<dbReference type="PANTHER" id="PTHR33383:SF1">
    <property type="entry name" value="MEMBRANE PROTEIN INSERTION EFFICIENCY FACTOR-RELATED"/>
    <property type="match status" value="1"/>
</dbReference>
<dbReference type="Pfam" id="PF01809">
    <property type="entry name" value="YidD"/>
    <property type="match status" value="1"/>
</dbReference>
<dbReference type="SMART" id="SM01234">
    <property type="entry name" value="Haemolytic"/>
    <property type="match status" value="1"/>
</dbReference>
<gene>
    <name type="ordered locus">BLIJ_2568.1</name>
    <name type="ordered locus">Blon_2497</name>
</gene>
<protein>
    <recommendedName>
        <fullName evidence="1">Putative membrane protein insertion efficiency factor</fullName>
    </recommendedName>
</protein>
<name>YIDD_BIFLS</name>
<organism>
    <name type="scientific">Bifidobacterium longum subsp. infantis (strain ATCC 15697 / DSM 20088 / JCM 1222 / NCTC 11817 / S12)</name>
    <dbReference type="NCBI Taxonomy" id="391904"/>
    <lineage>
        <taxon>Bacteria</taxon>
        <taxon>Bacillati</taxon>
        <taxon>Actinomycetota</taxon>
        <taxon>Actinomycetes</taxon>
        <taxon>Bifidobacteriales</taxon>
        <taxon>Bifidobacteriaceae</taxon>
        <taxon>Bifidobacterium</taxon>
    </lineage>
</organism>
<feature type="chain" id="PRO_1000197742" description="Putative membrane protein insertion efficiency factor">
    <location>
        <begin position="1"/>
        <end position="105"/>
    </location>
</feature>
<keyword id="KW-1003">Cell membrane</keyword>
<keyword id="KW-0472">Membrane</keyword>
<reference key="1">
    <citation type="journal article" date="2008" name="Proc. Natl. Acad. Sci. U.S.A.">
        <title>The genome sequence of Bifidobacterium longum subsp. infantis reveals adaptations for milk utilization within the infant microbiome.</title>
        <authorList>
            <person name="Sela D.A."/>
            <person name="Chapman J."/>
            <person name="Adeuya A."/>
            <person name="Kim J.H."/>
            <person name="Chen F."/>
            <person name="Whitehead T.R."/>
            <person name="Lapidus A."/>
            <person name="Rokhsar D.S."/>
            <person name="Lebrilla C.B."/>
            <person name="German J.B."/>
            <person name="Price N.P."/>
            <person name="Richardson P.M."/>
            <person name="Mills D.A."/>
        </authorList>
    </citation>
    <scope>NUCLEOTIDE SEQUENCE [LARGE SCALE GENOMIC DNA]</scope>
    <source>
        <strain>ATCC 15697 / DSM 20088 / JCM 1222 / NCTC 11817 / S12</strain>
    </source>
</reference>
<reference key="2">
    <citation type="journal article" date="2011" name="Nature">
        <title>Bifidobacteria can protect from enteropathogenic infection through production of acetate.</title>
        <authorList>
            <person name="Fukuda S."/>
            <person name="Toh H."/>
            <person name="Hase K."/>
            <person name="Oshima K."/>
            <person name="Nakanishi Y."/>
            <person name="Yoshimura K."/>
            <person name="Tobe T."/>
            <person name="Clarke J.M."/>
            <person name="Topping D.L."/>
            <person name="Suzuki T."/>
            <person name="Taylor T.D."/>
            <person name="Itoh K."/>
            <person name="Kikuchi J."/>
            <person name="Morita H."/>
            <person name="Hattori M."/>
            <person name="Ohno H."/>
        </authorList>
    </citation>
    <scope>NUCLEOTIDE SEQUENCE [LARGE SCALE GENOMIC DNA]</scope>
    <source>
        <strain>ATCC 15697 / DSM 20088 / JCM 1222 / NCTC 11817 / S12</strain>
    </source>
</reference>
<evidence type="ECO:0000255" key="1">
    <source>
        <dbReference type="HAMAP-Rule" id="MF_00386"/>
    </source>
</evidence>
<sequence length="105" mass="12111">MTASFKAVMIGGVRWYQQRISANTPPCCKYYPTCSNYAIEALERYGAFKGGVLAVLRLLRCRPWSRGGIDDVPQRYSIFYRFSWSKAHEEPRLTPLATTQREAQR</sequence>
<accession>B7GPF6</accession>
<proteinExistence type="inferred from homology"/>
<comment type="function">
    <text evidence="1">Could be involved in insertion of integral membrane proteins into the membrane.</text>
</comment>
<comment type="subcellular location">
    <subcellularLocation>
        <location evidence="1">Cell membrane</location>
        <topology evidence="1">Peripheral membrane protein</topology>
        <orientation evidence="1">Cytoplasmic side</orientation>
    </subcellularLocation>
</comment>
<comment type="similarity">
    <text evidence="1">Belongs to the UPF0161 family.</text>
</comment>